<protein>
    <recommendedName>
        <fullName evidence="1">D-aminoacyl-tRNA deacylase</fullName>
        <shortName evidence="1">DTD</shortName>
        <ecNumber evidence="1">3.1.1.96</ecNumber>
    </recommendedName>
    <alternativeName>
        <fullName evidence="1">Gly-tRNA(Ala) deacylase</fullName>
    </alternativeName>
</protein>
<organism>
    <name type="scientific">Escherichia coli O7:K1 (strain IAI39 / ExPEC)</name>
    <dbReference type="NCBI Taxonomy" id="585057"/>
    <lineage>
        <taxon>Bacteria</taxon>
        <taxon>Pseudomonadati</taxon>
        <taxon>Pseudomonadota</taxon>
        <taxon>Gammaproteobacteria</taxon>
        <taxon>Enterobacterales</taxon>
        <taxon>Enterobacteriaceae</taxon>
        <taxon>Escherichia</taxon>
    </lineage>
</organism>
<feature type="chain" id="PRO_1000127525" description="D-aminoacyl-tRNA deacylase">
    <location>
        <begin position="1"/>
        <end position="145"/>
    </location>
</feature>
<feature type="short sequence motif" description="Gly-cisPro motif, important for rejection of L-amino acids" evidence="1">
    <location>
        <begin position="137"/>
        <end position="138"/>
    </location>
</feature>
<accession>B7NUY4</accession>
<gene>
    <name evidence="1" type="primary">dtd</name>
    <name type="ordered locus">ECIAI39_3113</name>
</gene>
<comment type="function">
    <text evidence="1">An aminoacyl-tRNA editing enzyme that deacylates mischarged D-aminoacyl-tRNAs. Also deacylates mischarged glycyl-tRNA(Ala), protecting cells against glycine mischarging by AlaRS. Acts via tRNA-based rather than protein-based catalysis; rejects L-amino acids rather than detecting D-amino acids in the active site. By recycling D-aminoacyl-tRNA to D-amino acids and free tRNA molecules, this enzyme counteracts the toxicity associated with the formation of D-aminoacyl-tRNA entities in vivo and helps enforce protein L-homochirality.</text>
</comment>
<comment type="catalytic activity">
    <reaction evidence="1">
        <text>glycyl-tRNA(Ala) + H2O = tRNA(Ala) + glycine + H(+)</text>
        <dbReference type="Rhea" id="RHEA:53744"/>
        <dbReference type="Rhea" id="RHEA-COMP:9657"/>
        <dbReference type="Rhea" id="RHEA-COMP:13640"/>
        <dbReference type="ChEBI" id="CHEBI:15377"/>
        <dbReference type="ChEBI" id="CHEBI:15378"/>
        <dbReference type="ChEBI" id="CHEBI:57305"/>
        <dbReference type="ChEBI" id="CHEBI:78442"/>
        <dbReference type="ChEBI" id="CHEBI:78522"/>
        <dbReference type="EC" id="3.1.1.96"/>
    </reaction>
</comment>
<comment type="catalytic activity">
    <reaction evidence="1">
        <text>a D-aminoacyl-tRNA + H2O = a tRNA + a D-alpha-amino acid + H(+)</text>
        <dbReference type="Rhea" id="RHEA:13953"/>
        <dbReference type="Rhea" id="RHEA-COMP:10123"/>
        <dbReference type="Rhea" id="RHEA-COMP:10124"/>
        <dbReference type="ChEBI" id="CHEBI:15377"/>
        <dbReference type="ChEBI" id="CHEBI:15378"/>
        <dbReference type="ChEBI" id="CHEBI:59871"/>
        <dbReference type="ChEBI" id="CHEBI:78442"/>
        <dbReference type="ChEBI" id="CHEBI:79333"/>
        <dbReference type="EC" id="3.1.1.96"/>
    </reaction>
</comment>
<comment type="subunit">
    <text evidence="1">Homodimer.</text>
</comment>
<comment type="subcellular location">
    <subcellularLocation>
        <location evidence="1">Cytoplasm</location>
    </subcellularLocation>
</comment>
<comment type="domain">
    <text evidence="1">A Gly-cisPro motif from one monomer fits into the active site of the other monomer to allow specific chiral rejection of L-amino acids.</text>
</comment>
<comment type="similarity">
    <text evidence="1">Belongs to the DTD family.</text>
</comment>
<keyword id="KW-0963">Cytoplasm</keyword>
<keyword id="KW-0378">Hydrolase</keyword>
<keyword id="KW-0694">RNA-binding</keyword>
<keyword id="KW-0820">tRNA-binding</keyword>
<sequence>MIALIQRVTRASVTVEGEVTGEIGAGLLVLLGVEKDDDEQKANRLCERVLGYRIFSDVEGKMNLNVQQAGGSVLVVSQFTLAADTERGMRPSFSKGASPDRAEALYDYFVERCRQQEMNTQTGRFAADMQVSLVNDGPVTFWLQV</sequence>
<name>DTD_ECO7I</name>
<reference key="1">
    <citation type="journal article" date="2009" name="PLoS Genet.">
        <title>Organised genome dynamics in the Escherichia coli species results in highly diverse adaptive paths.</title>
        <authorList>
            <person name="Touchon M."/>
            <person name="Hoede C."/>
            <person name="Tenaillon O."/>
            <person name="Barbe V."/>
            <person name="Baeriswyl S."/>
            <person name="Bidet P."/>
            <person name="Bingen E."/>
            <person name="Bonacorsi S."/>
            <person name="Bouchier C."/>
            <person name="Bouvet O."/>
            <person name="Calteau A."/>
            <person name="Chiapello H."/>
            <person name="Clermont O."/>
            <person name="Cruveiller S."/>
            <person name="Danchin A."/>
            <person name="Diard M."/>
            <person name="Dossat C."/>
            <person name="Karoui M.E."/>
            <person name="Frapy E."/>
            <person name="Garry L."/>
            <person name="Ghigo J.M."/>
            <person name="Gilles A.M."/>
            <person name="Johnson J."/>
            <person name="Le Bouguenec C."/>
            <person name="Lescat M."/>
            <person name="Mangenot S."/>
            <person name="Martinez-Jehanne V."/>
            <person name="Matic I."/>
            <person name="Nassif X."/>
            <person name="Oztas S."/>
            <person name="Petit M.A."/>
            <person name="Pichon C."/>
            <person name="Rouy Z."/>
            <person name="Ruf C.S."/>
            <person name="Schneider D."/>
            <person name="Tourret J."/>
            <person name="Vacherie B."/>
            <person name="Vallenet D."/>
            <person name="Medigue C."/>
            <person name="Rocha E.P.C."/>
            <person name="Denamur E."/>
        </authorList>
    </citation>
    <scope>NUCLEOTIDE SEQUENCE [LARGE SCALE GENOMIC DNA]</scope>
    <source>
        <strain>IAI39 / ExPEC</strain>
    </source>
</reference>
<evidence type="ECO:0000255" key="1">
    <source>
        <dbReference type="HAMAP-Rule" id="MF_00518"/>
    </source>
</evidence>
<proteinExistence type="inferred from homology"/>
<dbReference type="EC" id="3.1.1.96" evidence="1"/>
<dbReference type="EMBL" id="CU928164">
    <property type="protein sequence ID" value="CAR19232.1"/>
    <property type="molecule type" value="Genomic_DNA"/>
</dbReference>
<dbReference type="RefSeq" id="WP_000560988.1">
    <property type="nucleotide sequence ID" value="NC_011750.1"/>
</dbReference>
<dbReference type="RefSeq" id="YP_002409042.1">
    <property type="nucleotide sequence ID" value="NC_011750.1"/>
</dbReference>
<dbReference type="SMR" id="B7NUY4"/>
<dbReference type="STRING" id="585057.ECIAI39_3113"/>
<dbReference type="KEGG" id="ect:ECIAI39_3113"/>
<dbReference type="PATRIC" id="fig|585057.6.peg.3229"/>
<dbReference type="HOGENOM" id="CLU_076901_1_1_6"/>
<dbReference type="Proteomes" id="UP000000749">
    <property type="component" value="Chromosome"/>
</dbReference>
<dbReference type="GO" id="GO:0005737">
    <property type="term" value="C:cytoplasm"/>
    <property type="evidence" value="ECO:0007669"/>
    <property type="project" value="UniProtKB-SubCell"/>
</dbReference>
<dbReference type="GO" id="GO:0051500">
    <property type="term" value="F:D-tyrosyl-tRNA(Tyr) deacylase activity"/>
    <property type="evidence" value="ECO:0007669"/>
    <property type="project" value="TreeGrafter"/>
</dbReference>
<dbReference type="GO" id="GO:0106026">
    <property type="term" value="F:Gly-tRNA(Ala) deacylase activity"/>
    <property type="evidence" value="ECO:0007669"/>
    <property type="project" value="UniProtKB-UniRule"/>
</dbReference>
<dbReference type="GO" id="GO:0043908">
    <property type="term" value="F:Ser(Gly)-tRNA(Ala) hydrolase activity"/>
    <property type="evidence" value="ECO:0007669"/>
    <property type="project" value="UniProtKB-UniRule"/>
</dbReference>
<dbReference type="GO" id="GO:0000049">
    <property type="term" value="F:tRNA binding"/>
    <property type="evidence" value="ECO:0007669"/>
    <property type="project" value="UniProtKB-UniRule"/>
</dbReference>
<dbReference type="GO" id="GO:0019478">
    <property type="term" value="P:D-amino acid catabolic process"/>
    <property type="evidence" value="ECO:0007669"/>
    <property type="project" value="UniProtKB-UniRule"/>
</dbReference>
<dbReference type="CDD" id="cd00563">
    <property type="entry name" value="Dtyr_deacylase"/>
    <property type="match status" value="1"/>
</dbReference>
<dbReference type="FunFam" id="3.50.80.10:FF:000001">
    <property type="entry name" value="D-aminoacyl-tRNA deacylase"/>
    <property type="match status" value="1"/>
</dbReference>
<dbReference type="Gene3D" id="3.50.80.10">
    <property type="entry name" value="D-tyrosyl-tRNA(Tyr) deacylase"/>
    <property type="match status" value="1"/>
</dbReference>
<dbReference type="HAMAP" id="MF_00518">
    <property type="entry name" value="Deacylase_Dtd"/>
    <property type="match status" value="1"/>
</dbReference>
<dbReference type="InterPro" id="IPR003732">
    <property type="entry name" value="Daa-tRNA_deacyls_DTD"/>
</dbReference>
<dbReference type="InterPro" id="IPR023509">
    <property type="entry name" value="DTD-like_sf"/>
</dbReference>
<dbReference type="NCBIfam" id="TIGR00256">
    <property type="entry name" value="D-aminoacyl-tRNA deacylase"/>
    <property type="match status" value="1"/>
</dbReference>
<dbReference type="PANTHER" id="PTHR10472:SF5">
    <property type="entry name" value="D-AMINOACYL-TRNA DEACYLASE 1"/>
    <property type="match status" value="1"/>
</dbReference>
<dbReference type="PANTHER" id="PTHR10472">
    <property type="entry name" value="D-TYROSYL-TRNA TYR DEACYLASE"/>
    <property type="match status" value="1"/>
</dbReference>
<dbReference type="Pfam" id="PF02580">
    <property type="entry name" value="Tyr_Deacylase"/>
    <property type="match status" value="1"/>
</dbReference>
<dbReference type="SUPFAM" id="SSF69500">
    <property type="entry name" value="DTD-like"/>
    <property type="match status" value="1"/>
</dbReference>